<name>RL331_LACDB</name>
<sequence length="49" mass="5861">MADNIILECTECGDRSYLSKKNKRKHPERLTLKKYCPVERQVTLHRETK</sequence>
<keyword id="KW-0687">Ribonucleoprotein</keyword>
<keyword id="KW-0689">Ribosomal protein</keyword>
<feature type="chain" id="PRO_0000356499" description="Large ribosomal subunit protein bL33A">
    <location>
        <begin position="1"/>
        <end position="49"/>
    </location>
</feature>
<organism>
    <name type="scientific">Lactobacillus delbrueckii subsp. bulgaricus (strain ATCC BAA-365 / Lb-18)</name>
    <dbReference type="NCBI Taxonomy" id="321956"/>
    <lineage>
        <taxon>Bacteria</taxon>
        <taxon>Bacillati</taxon>
        <taxon>Bacillota</taxon>
        <taxon>Bacilli</taxon>
        <taxon>Lactobacillales</taxon>
        <taxon>Lactobacillaceae</taxon>
        <taxon>Lactobacillus</taxon>
    </lineage>
</organism>
<dbReference type="EMBL" id="CP000412">
    <property type="protein sequence ID" value="ABJ58891.1"/>
    <property type="molecule type" value="Genomic_DNA"/>
</dbReference>
<dbReference type="SMR" id="Q049I1"/>
<dbReference type="KEGG" id="lbu:LBUL_1376"/>
<dbReference type="HOGENOM" id="CLU_190949_0_2_9"/>
<dbReference type="BioCyc" id="LDEL321956:LBUL_RS10190-MONOMER"/>
<dbReference type="GO" id="GO:0005737">
    <property type="term" value="C:cytoplasm"/>
    <property type="evidence" value="ECO:0007669"/>
    <property type="project" value="UniProtKB-ARBA"/>
</dbReference>
<dbReference type="GO" id="GO:1990904">
    <property type="term" value="C:ribonucleoprotein complex"/>
    <property type="evidence" value="ECO:0007669"/>
    <property type="project" value="UniProtKB-KW"/>
</dbReference>
<dbReference type="GO" id="GO:0005840">
    <property type="term" value="C:ribosome"/>
    <property type="evidence" value="ECO:0007669"/>
    <property type="project" value="UniProtKB-KW"/>
</dbReference>
<dbReference type="GO" id="GO:0003735">
    <property type="term" value="F:structural constituent of ribosome"/>
    <property type="evidence" value="ECO:0007669"/>
    <property type="project" value="InterPro"/>
</dbReference>
<dbReference type="GO" id="GO:0006412">
    <property type="term" value="P:translation"/>
    <property type="evidence" value="ECO:0007669"/>
    <property type="project" value="UniProtKB-UniRule"/>
</dbReference>
<dbReference type="Gene3D" id="2.20.28.120">
    <property type="entry name" value="Ribosomal protein L33"/>
    <property type="match status" value="1"/>
</dbReference>
<dbReference type="HAMAP" id="MF_00294">
    <property type="entry name" value="Ribosomal_bL33"/>
    <property type="match status" value="1"/>
</dbReference>
<dbReference type="InterPro" id="IPR001705">
    <property type="entry name" value="Ribosomal_bL33"/>
</dbReference>
<dbReference type="InterPro" id="IPR018264">
    <property type="entry name" value="Ribosomal_bL33_CS"/>
</dbReference>
<dbReference type="InterPro" id="IPR038584">
    <property type="entry name" value="Ribosomal_bL33_sf"/>
</dbReference>
<dbReference type="InterPro" id="IPR011332">
    <property type="entry name" value="Ribosomal_zn-bd"/>
</dbReference>
<dbReference type="NCBIfam" id="NF001764">
    <property type="entry name" value="PRK00504.1"/>
    <property type="match status" value="1"/>
</dbReference>
<dbReference type="NCBIfam" id="NF001860">
    <property type="entry name" value="PRK00595.1"/>
    <property type="match status" value="1"/>
</dbReference>
<dbReference type="NCBIfam" id="TIGR01023">
    <property type="entry name" value="rpmG_bact"/>
    <property type="match status" value="1"/>
</dbReference>
<dbReference type="PANTHER" id="PTHR43168">
    <property type="entry name" value="50S RIBOSOMAL PROTEIN L33, CHLOROPLASTIC"/>
    <property type="match status" value="1"/>
</dbReference>
<dbReference type="PANTHER" id="PTHR43168:SF2">
    <property type="entry name" value="LARGE RIBOSOMAL SUBUNIT PROTEIN BL33C"/>
    <property type="match status" value="1"/>
</dbReference>
<dbReference type="Pfam" id="PF00471">
    <property type="entry name" value="Ribosomal_L33"/>
    <property type="match status" value="1"/>
</dbReference>
<dbReference type="SUPFAM" id="SSF57829">
    <property type="entry name" value="Zn-binding ribosomal proteins"/>
    <property type="match status" value="1"/>
</dbReference>
<dbReference type="PROSITE" id="PS00582">
    <property type="entry name" value="RIBOSOMAL_L33"/>
    <property type="match status" value="1"/>
</dbReference>
<reference key="1">
    <citation type="journal article" date="2006" name="Proc. Natl. Acad. Sci. U.S.A.">
        <title>Comparative genomics of the lactic acid bacteria.</title>
        <authorList>
            <person name="Makarova K.S."/>
            <person name="Slesarev A."/>
            <person name="Wolf Y.I."/>
            <person name="Sorokin A."/>
            <person name="Mirkin B."/>
            <person name="Koonin E.V."/>
            <person name="Pavlov A."/>
            <person name="Pavlova N."/>
            <person name="Karamychev V."/>
            <person name="Polouchine N."/>
            <person name="Shakhova V."/>
            <person name="Grigoriev I."/>
            <person name="Lou Y."/>
            <person name="Rohksar D."/>
            <person name="Lucas S."/>
            <person name="Huang K."/>
            <person name="Goodstein D.M."/>
            <person name="Hawkins T."/>
            <person name="Plengvidhya V."/>
            <person name="Welker D."/>
            <person name="Hughes J."/>
            <person name="Goh Y."/>
            <person name="Benson A."/>
            <person name="Baldwin K."/>
            <person name="Lee J.-H."/>
            <person name="Diaz-Muniz I."/>
            <person name="Dosti B."/>
            <person name="Smeianov V."/>
            <person name="Wechter W."/>
            <person name="Barabote R."/>
            <person name="Lorca G."/>
            <person name="Altermann E."/>
            <person name="Barrangou R."/>
            <person name="Ganesan B."/>
            <person name="Xie Y."/>
            <person name="Rawsthorne H."/>
            <person name="Tamir D."/>
            <person name="Parker C."/>
            <person name="Breidt F."/>
            <person name="Broadbent J.R."/>
            <person name="Hutkins R."/>
            <person name="O'Sullivan D."/>
            <person name="Steele J."/>
            <person name="Unlu G."/>
            <person name="Saier M.H. Jr."/>
            <person name="Klaenhammer T."/>
            <person name="Richardson P."/>
            <person name="Kozyavkin S."/>
            <person name="Weimer B.C."/>
            <person name="Mills D.A."/>
        </authorList>
    </citation>
    <scope>NUCLEOTIDE SEQUENCE [LARGE SCALE GENOMIC DNA]</scope>
    <source>
        <strain>ATCC BAA-365 / Lb-18</strain>
    </source>
</reference>
<protein>
    <recommendedName>
        <fullName evidence="1">Large ribosomal subunit protein bL33A</fullName>
    </recommendedName>
    <alternativeName>
        <fullName evidence="1">50S ribosomal protein L33 1</fullName>
    </alternativeName>
</protein>
<gene>
    <name evidence="1" type="primary">rpmG1</name>
    <name type="ordered locus">LBUL_1376</name>
</gene>
<accession>Q049I1</accession>
<proteinExistence type="inferred from homology"/>
<comment type="similarity">
    <text evidence="1">Belongs to the bacterial ribosomal protein bL33 family.</text>
</comment>
<evidence type="ECO:0000255" key="1">
    <source>
        <dbReference type="HAMAP-Rule" id="MF_00294"/>
    </source>
</evidence>